<evidence type="ECO:0000250" key="1"/>
<evidence type="ECO:0000305" key="2"/>
<keyword id="KW-0004">4Fe-4S</keyword>
<keyword id="KW-0997">Cell inner membrane</keyword>
<keyword id="KW-1003">Cell membrane</keyword>
<keyword id="KW-0408">Iron</keyword>
<keyword id="KW-0411">Iron-sulfur</keyword>
<keyword id="KW-0472">Membrane</keyword>
<keyword id="KW-0479">Metal-binding</keyword>
<keyword id="KW-0520">NAD</keyword>
<keyword id="KW-0874">Quinone</keyword>
<keyword id="KW-1185">Reference proteome</keyword>
<keyword id="KW-0677">Repeat</keyword>
<keyword id="KW-1278">Translocase</keyword>
<keyword id="KW-0830">Ubiquinone</keyword>
<accession>P0AFD8</accession>
<accession>P33604</accession>
<accession>P76488</accession>
<accession>P78183</accession>
<gene>
    <name type="primary">nuoI</name>
    <name type="ordered locus">Z3540</name>
    <name type="ordered locus">ECs3165</name>
</gene>
<proteinExistence type="inferred from homology"/>
<reference key="1">
    <citation type="journal article" date="2001" name="Nature">
        <title>Genome sequence of enterohaemorrhagic Escherichia coli O157:H7.</title>
        <authorList>
            <person name="Perna N.T."/>
            <person name="Plunkett G. III"/>
            <person name="Burland V."/>
            <person name="Mau B."/>
            <person name="Glasner J.D."/>
            <person name="Rose D.J."/>
            <person name="Mayhew G.F."/>
            <person name="Evans P.S."/>
            <person name="Gregor J."/>
            <person name="Kirkpatrick H.A."/>
            <person name="Posfai G."/>
            <person name="Hackett J."/>
            <person name="Klink S."/>
            <person name="Boutin A."/>
            <person name="Shao Y."/>
            <person name="Miller L."/>
            <person name="Grotbeck E.J."/>
            <person name="Davis N.W."/>
            <person name="Lim A."/>
            <person name="Dimalanta E.T."/>
            <person name="Potamousis K."/>
            <person name="Apodaca J."/>
            <person name="Anantharaman T.S."/>
            <person name="Lin J."/>
            <person name="Yen G."/>
            <person name="Schwartz D.C."/>
            <person name="Welch R.A."/>
            <person name="Blattner F.R."/>
        </authorList>
    </citation>
    <scope>NUCLEOTIDE SEQUENCE [LARGE SCALE GENOMIC DNA]</scope>
    <source>
        <strain>O157:H7 / EDL933 / ATCC 700927 / EHEC</strain>
    </source>
</reference>
<reference key="2">
    <citation type="journal article" date="2001" name="DNA Res.">
        <title>Complete genome sequence of enterohemorrhagic Escherichia coli O157:H7 and genomic comparison with a laboratory strain K-12.</title>
        <authorList>
            <person name="Hayashi T."/>
            <person name="Makino K."/>
            <person name="Ohnishi M."/>
            <person name="Kurokawa K."/>
            <person name="Ishii K."/>
            <person name="Yokoyama K."/>
            <person name="Han C.-G."/>
            <person name="Ohtsubo E."/>
            <person name="Nakayama K."/>
            <person name="Murata T."/>
            <person name="Tanaka M."/>
            <person name="Tobe T."/>
            <person name="Iida T."/>
            <person name="Takami H."/>
            <person name="Honda T."/>
            <person name="Sasakawa C."/>
            <person name="Ogasawara N."/>
            <person name="Yasunaga T."/>
            <person name="Kuhara S."/>
            <person name="Shiba T."/>
            <person name="Hattori M."/>
            <person name="Shinagawa H."/>
        </authorList>
    </citation>
    <scope>NUCLEOTIDE SEQUENCE [LARGE SCALE GENOMIC DNA]</scope>
    <source>
        <strain>O157:H7 / Sakai / RIMD 0509952 / EHEC</strain>
    </source>
</reference>
<sequence length="180" mass="20538">MTLKELLVGFGTQVRSIWMIGLHAFAKRETRMYPEEPVYLPPRYRGRIVLTRDPDGEERCVACNLCAVACPVGCISLQKAETKDGRWYPEFFRINFSRCIFCGLCEEACPTTAIQLTPDFEMGEYKRQDLVYEKEDLLISGPGKYPEYNFYRMAGMAIDGKDKGEAENEAKPIDVKSLLP</sequence>
<protein>
    <recommendedName>
        <fullName>NADH-quinone oxidoreductase subunit I</fullName>
        <ecNumber>7.1.1.-</ecNumber>
    </recommendedName>
    <alternativeName>
        <fullName>NADH dehydrogenase I subunit I</fullName>
    </alternativeName>
    <alternativeName>
        <fullName>NDH-1 subunit I</fullName>
    </alternativeName>
    <alternativeName>
        <fullName>NUO9</fullName>
    </alternativeName>
</protein>
<comment type="function">
    <text evidence="1">NDH-1 shuttles electrons from NADH, via FMN and iron-sulfur (Fe-S) centers, to quinones in the respiratory chain. The immediate electron acceptor for the enzyme in this species is believed to be ubiquinone. Couples the redox reaction to proton translocation (for every two electrons transferred, four hydrogen ions are translocated across the cytoplasmic membrane), and thus conserves the redox energy in a proton gradient.</text>
</comment>
<comment type="catalytic activity">
    <reaction>
        <text>a quinone + NADH + 5 H(+)(in) = a quinol + NAD(+) + 4 H(+)(out)</text>
        <dbReference type="Rhea" id="RHEA:57888"/>
        <dbReference type="ChEBI" id="CHEBI:15378"/>
        <dbReference type="ChEBI" id="CHEBI:24646"/>
        <dbReference type="ChEBI" id="CHEBI:57540"/>
        <dbReference type="ChEBI" id="CHEBI:57945"/>
        <dbReference type="ChEBI" id="CHEBI:132124"/>
    </reaction>
</comment>
<comment type="cofactor">
    <cofactor evidence="1">
        <name>[4Fe-4S] cluster</name>
        <dbReference type="ChEBI" id="CHEBI:49883"/>
    </cofactor>
    <text evidence="1">Binds 2 [4Fe-4S] clusters per subunit.</text>
</comment>
<comment type="subunit">
    <text evidence="1">NDH-1 is composed of 13 different subunits. Subunits NuoA, H, J, K, L, M, N constitute the membrane sector of the complex (By similarity).</text>
</comment>
<comment type="subcellular location">
    <subcellularLocation>
        <location evidence="2">Cell inner membrane</location>
        <topology evidence="2">Peripheral membrane protein</topology>
    </subcellularLocation>
</comment>
<comment type="similarity">
    <text evidence="2">Belongs to the complex I 23 kDa subunit family.</text>
</comment>
<dbReference type="EC" id="7.1.1.-"/>
<dbReference type="EMBL" id="AE005174">
    <property type="protein sequence ID" value="AAG57410.1"/>
    <property type="molecule type" value="Genomic_DNA"/>
</dbReference>
<dbReference type="EMBL" id="BA000007">
    <property type="protein sequence ID" value="BAB36588.1"/>
    <property type="molecule type" value="Genomic_DNA"/>
</dbReference>
<dbReference type="PIR" id="E91024">
    <property type="entry name" value="E91024"/>
</dbReference>
<dbReference type="PIR" id="F85868">
    <property type="entry name" value="F85868"/>
</dbReference>
<dbReference type="RefSeq" id="NP_311192.1">
    <property type="nucleotide sequence ID" value="NC_002695.1"/>
</dbReference>
<dbReference type="RefSeq" id="WP_000172749.1">
    <property type="nucleotide sequence ID" value="NZ_VOAI01000001.1"/>
</dbReference>
<dbReference type="SMR" id="P0AFD8"/>
<dbReference type="STRING" id="155864.Z3540"/>
<dbReference type="GeneID" id="89517116"/>
<dbReference type="GeneID" id="916873"/>
<dbReference type="KEGG" id="ece:Z3540"/>
<dbReference type="KEGG" id="ecs:ECs_3165"/>
<dbReference type="PATRIC" id="fig|386585.9.peg.3303"/>
<dbReference type="eggNOG" id="COG1143">
    <property type="taxonomic scope" value="Bacteria"/>
</dbReference>
<dbReference type="HOGENOM" id="CLU_067218_4_3_6"/>
<dbReference type="OMA" id="WYPDFFR"/>
<dbReference type="Proteomes" id="UP000000558">
    <property type="component" value="Chromosome"/>
</dbReference>
<dbReference type="Proteomes" id="UP000002519">
    <property type="component" value="Chromosome"/>
</dbReference>
<dbReference type="GO" id="GO:0005886">
    <property type="term" value="C:plasma membrane"/>
    <property type="evidence" value="ECO:0007669"/>
    <property type="project" value="UniProtKB-SubCell"/>
</dbReference>
<dbReference type="GO" id="GO:0051539">
    <property type="term" value="F:4 iron, 4 sulfur cluster binding"/>
    <property type="evidence" value="ECO:0007669"/>
    <property type="project" value="UniProtKB-KW"/>
</dbReference>
<dbReference type="GO" id="GO:0005506">
    <property type="term" value="F:iron ion binding"/>
    <property type="evidence" value="ECO:0007669"/>
    <property type="project" value="UniProtKB-UniRule"/>
</dbReference>
<dbReference type="GO" id="GO:0050136">
    <property type="term" value="F:NADH:ubiquinone reductase (non-electrogenic) activity"/>
    <property type="evidence" value="ECO:0007669"/>
    <property type="project" value="UniProtKB-UniRule"/>
</dbReference>
<dbReference type="GO" id="GO:0048038">
    <property type="term" value="F:quinone binding"/>
    <property type="evidence" value="ECO:0007669"/>
    <property type="project" value="UniProtKB-KW"/>
</dbReference>
<dbReference type="GO" id="GO:0009060">
    <property type="term" value="P:aerobic respiration"/>
    <property type="evidence" value="ECO:0007669"/>
    <property type="project" value="TreeGrafter"/>
</dbReference>
<dbReference type="FunFam" id="3.30.70.3270:FF:000002">
    <property type="entry name" value="NADH-quinone oxidoreductase subunit I"/>
    <property type="match status" value="1"/>
</dbReference>
<dbReference type="Gene3D" id="3.30.70.3270">
    <property type="match status" value="1"/>
</dbReference>
<dbReference type="HAMAP" id="MF_01351">
    <property type="entry name" value="NDH1_NuoI"/>
    <property type="match status" value="1"/>
</dbReference>
<dbReference type="InterPro" id="IPR017896">
    <property type="entry name" value="4Fe4S_Fe-S-bd"/>
</dbReference>
<dbReference type="InterPro" id="IPR017900">
    <property type="entry name" value="4Fe4S_Fe_S_CS"/>
</dbReference>
<dbReference type="InterPro" id="IPR010226">
    <property type="entry name" value="NADH_quinone_OxRdtase_chainI"/>
</dbReference>
<dbReference type="NCBIfam" id="TIGR01971">
    <property type="entry name" value="NuoI"/>
    <property type="match status" value="1"/>
</dbReference>
<dbReference type="NCBIfam" id="NF004536">
    <property type="entry name" value="PRK05888.1-1"/>
    <property type="match status" value="1"/>
</dbReference>
<dbReference type="PANTHER" id="PTHR10849:SF20">
    <property type="entry name" value="NADH DEHYDROGENASE [UBIQUINONE] IRON-SULFUR PROTEIN 8, MITOCHONDRIAL"/>
    <property type="match status" value="1"/>
</dbReference>
<dbReference type="PANTHER" id="PTHR10849">
    <property type="entry name" value="NADH DEHYDROGENASE UBIQUINONE IRON-SULFUR PROTEIN 8, MITOCHONDRIAL"/>
    <property type="match status" value="1"/>
</dbReference>
<dbReference type="Pfam" id="PF12838">
    <property type="entry name" value="Fer4_7"/>
    <property type="match status" value="1"/>
</dbReference>
<dbReference type="SUPFAM" id="SSF54862">
    <property type="entry name" value="4Fe-4S ferredoxins"/>
    <property type="match status" value="1"/>
</dbReference>
<dbReference type="PROSITE" id="PS00198">
    <property type="entry name" value="4FE4S_FER_1"/>
    <property type="match status" value="2"/>
</dbReference>
<dbReference type="PROSITE" id="PS51379">
    <property type="entry name" value="4FE4S_FER_2"/>
    <property type="match status" value="2"/>
</dbReference>
<feature type="chain" id="PRO_0000118723" description="NADH-quinone oxidoreductase subunit I">
    <location>
        <begin position="1"/>
        <end position="180"/>
    </location>
</feature>
<feature type="domain" description="4Fe-4S ferredoxin-type 1">
    <location>
        <begin position="50"/>
        <end position="80"/>
    </location>
</feature>
<feature type="domain" description="4Fe-4S ferredoxin-type 2">
    <location>
        <begin position="90"/>
        <end position="119"/>
    </location>
</feature>
<feature type="binding site" evidence="1">
    <location>
        <position position="60"/>
    </location>
    <ligand>
        <name>[4Fe-4S] cluster</name>
        <dbReference type="ChEBI" id="CHEBI:49883"/>
        <label>1</label>
    </ligand>
</feature>
<feature type="binding site" evidence="1">
    <location>
        <position position="63"/>
    </location>
    <ligand>
        <name>[4Fe-4S] cluster</name>
        <dbReference type="ChEBI" id="CHEBI:49883"/>
        <label>1</label>
    </ligand>
</feature>
<feature type="binding site" evidence="1">
    <location>
        <position position="66"/>
    </location>
    <ligand>
        <name>[4Fe-4S] cluster</name>
        <dbReference type="ChEBI" id="CHEBI:49883"/>
        <label>1</label>
    </ligand>
</feature>
<feature type="binding site" evidence="1">
    <location>
        <position position="70"/>
    </location>
    <ligand>
        <name>[4Fe-4S] cluster</name>
        <dbReference type="ChEBI" id="CHEBI:49883"/>
        <label>2</label>
    </ligand>
</feature>
<feature type="binding site" evidence="1">
    <location>
        <position position="99"/>
    </location>
    <ligand>
        <name>[4Fe-4S] cluster</name>
        <dbReference type="ChEBI" id="CHEBI:49883"/>
        <label>2</label>
    </ligand>
</feature>
<feature type="binding site" evidence="1">
    <location>
        <position position="102"/>
    </location>
    <ligand>
        <name>[4Fe-4S] cluster</name>
        <dbReference type="ChEBI" id="CHEBI:49883"/>
        <label>2</label>
    </ligand>
</feature>
<feature type="binding site" evidence="1">
    <location>
        <position position="105"/>
    </location>
    <ligand>
        <name>[4Fe-4S] cluster</name>
        <dbReference type="ChEBI" id="CHEBI:49883"/>
        <label>2</label>
    </ligand>
</feature>
<feature type="binding site" evidence="1">
    <location>
        <position position="109"/>
    </location>
    <ligand>
        <name>[4Fe-4S] cluster</name>
        <dbReference type="ChEBI" id="CHEBI:49883"/>
        <label>1</label>
    </ligand>
</feature>
<name>NUOI_ECO57</name>
<organism>
    <name type="scientific">Escherichia coli O157:H7</name>
    <dbReference type="NCBI Taxonomy" id="83334"/>
    <lineage>
        <taxon>Bacteria</taxon>
        <taxon>Pseudomonadati</taxon>
        <taxon>Pseudomonadota</taxon>
        <taxon>Gammaproteobacteria</taxon>
        <taxon>Enterobacterales</taxon>
        <taxon>Enterobacteriaceae</taxon>
        <taxon>Escherichia</taxon>
    </lineage>
</organism>